<feature type="chain" id="PRO_0000047108" description="Cilium assembly protein DZIP1">
    <location>
        <begin position="1"/>
        <end position="898"/>
    </location>
</feature>
<feature type="zinc finger region" description="C2H2-type" evidence="3">
    <location>
        <begin position="207"/>
        <end position="230"/>
    </location>
</feature>
<feature type="region of interest" description="Disordered" evidence="4">
    <location>
        <begin position="14"/>
        <end position="66"/>
    </location>
</feature>
<feature type="region of interest" description="Disordered" evidence="4">
    <location>
        <begin position="435"/>
        <end position="509"/>
    </location>
</feature>
<feature type="region of interest" description="Disordered" evidence="4">
    <location>
        <begin position="585"/>
        <end position="739"/>
    </location>
</feature>
<feature type="region of interest" description="Disordered" evidence="4">
    <location>
        <begin position="773"/>
        <end position="878"/>
    </location>
</feature>
<feature type="coiled-coil region" evidence="2">
    <location>
        <begin position="145"/>
        <end position="197"/>
    </location>
</feature>
<feature type="coiled-coil region" evidence="2">
    <location>
        <begin position="242"/>
        <end position="353"/>
    </location>
</feature>
<feature type="coiled-coil region" evidence="2">
    <location>
        <begin position="407"/>
        <end position="447"/>
    </location>
</feature>
<feature type="coiled-coil region" evidence="2">
    <location>
        <begin position="573"/>
        <end position="590"/>
    </location>
</feature>
<feature type="compositionally biased region" description="Low complexity" evidence="4">
    <location>
        <begin position="25"/>
        <end position="46"/>
    </location>
</feature>
<feature type="compositionally biased region" description="Polar residues" evidence="4">
    <location>
        <begin position="47"/>
        <end position="60"/>
    </location>
</feature>
<feature type="compositionally biased region" description="Polar residues" evidence="4">
    <location>
        <begin position="435"/>
        <end position="463"/>
    </location>
</feature>
<feature type="compositionally biased region" description="Low complexity" evidence="4">
    <location>
        <begin position="495"/>
        <end position="505"/>
    </location>
</feature>
<feature type="compositionally biased region" description="Polar residues" evidence="4">
    <location>
        <begin position="605"/>
        <end position="652"/>
    </location>
</feature>
<feature type="compositionally biased region" description="Acidic residues" evidence="4">
    <location>
        <begin position="662"/>
        <end position="684"/>
    </location>
</feature>
<feature type="compositionally biased region" description="Polar residues" evidence="4">
    <location>
        <begin position="685"/>
        <end position="715"/>
    </location>
</feature>
<feature type="compositionally biased region" description="Polar residues" evidence="4">
    <location>
        <begin position="723"/>
        <end position="734"/>
    </location>
</feature>
<feature type="compositionally biased region" description="Basic and acidic residues" evidence="4">
    <location>
        <begin position="797"/>
        <end position="815"/>
    </location>
</feature>
<feature type="compositionally biased region" description="Acidic residues" evidence="4">
    <location>
        <begin position="816"/>
        <end position="826"/>
    </location>
</feature>
<feature type="compositionally biased region" description="Polar residues" evidence="4">
    <location>
        <begin position="855"/>
        <end position="866"/>
    </location>
</feature>
<feature type="splice variant" id="VSP_010970" description="In isoform 2." evidence="8">
    <location>
        <begin position="473"/>
        <end position="492"/>
    </location>
</feature>
<feature type="sequence conflict" description="In Ref. 2; AAS58471." evidence="9" ref="2">
    <original>IN</original>
    <variation>MH</variation>
    <location>
        <begin position="324"/>
        <end position="325"/>
    </location>
</feature>
<feature type="sequence conflict" description="In Ref. 2; AAS58471." evidence="9" ref="2">
    <original>T</original>
    <variation>A</variation>
    <location>
        <position position="358"/>
    </location>
</feature>
<feature type="sequence conflict" description="In Ref. 3; CAD24437." evidence="9" ref="3">
    <original>PTEN</original>
    <variation>LMES</variation>
    <location>
        <begin position="501"/>
        <end position="504"/>
    </location>
</feature>
<feature type="sequence conflict" description="In Ref. 2; AAS58471 and 3; CAD24437." evidence="9" ref="2 3">
    <original>S</original>
    <variation>P</variation>
    <location>
        <position position="599"/>
    </location>
</feature>
<feature type="sequence conflict" description="In Ref. 2; AAS58471 and 3; CAD24437." evidence="9" ref="2 3">
    <original>T</original>
    <variation>S</variation>
    <location>
        <position position="642"/>
    </location>
</feature>
<feature type="sequence conflict" description="In Ref. 3; CAD24437." evidence="9" ref="3">
    <original>T</original>
    <variation>I</variation>
    <location>
        <position position="704"/>
    </location>
</feature>
<feature type="sequence conflict" description="In Ref. 2; AAS58471 and 3; CAD24437." evidence="9" ref="2 3">
    <original>T</original>
    <variation>S</variation>
    <location>
        <position position="737"/>
    </location>
</feature>
<feature type="sequence conflict" description="In Ref. 3; CAD24437." evidence="9" ref="3">
    <original>V</original>
    <variation>I</variation>
    <location>
        <position position="801"/>
    </location>
</feature>
<feature type="sequence conflict" description="In Ref. 2; AAS58471 and 3; CAD24437." evidence="9" ref="2 3">
    <location>
        <position position="816"/>
    </location>
</feature>
<evidence type="ECO:0000250" key="1">
    <source>
        <dbReference type="UniProtKB" id="Q86YF9"/>
    </source>
</evidence>
<evidence type="ECO:0000255" key="2"/>
<evidence type="ECO:0000255" key="3">
    <source>
        <dbReference type="PROSITE-ProRule" id="PRU00042"/>
    </source>
</evidence>
<evidence type="ECO:0000256" key="4">
    <source>
        <dbReference type="SAM" id="MobiDB-lite"/>
    </source>
</evidence>
<evidence type="ECO:0000269" key="5">
    <source>
    </source>
</evidence>
<evidence type="ECO:0000269" key="6">
    <source>
    </source>
</evidence>
<evidence type="ECO:0000269" key="7">
    <source>
    </source>
</evidence>
<evidence type="ECO:0000303" key="8">
    <source>
    </source>
</evidence>
<evidence type="ECO:0000305" key="9"/>
<comment type="function">
    <text evidence="5 6 7">Molecular adapter that recruits protein complexes required for cilium assembly and function to the cilium basal body (PubMed:19852954). Required for establishment of left-right asymmetry during embryogenesis (PubMed:19852954). Acts as a permissive factor that is required for the proper regulation of Hedgehog (Hh) target genes in response to Hh signals (PubMed:15115751). Acts downstream of the Smoothened protein to modulate Gli activity in the somites of the developing embryo (PubMed:15198976).</text>
</comment>
<comment type="subcellular location">
    <subcellularLocation>
        <location evidence="7">Cell projection</location>
        <location evidence="7">Cilium</location>
    </subcellularLocation>
    <subcellularLocation>
        <location evidence="1">Cytoplasm</location>
        <location evidence="1">Cytoskeleton</location>
        <location evidence="1">Cilium basal body</location>
    </subcellularLocation>
    <subcellularLocation>
        <location evidence="1">Cytoplasm</location>
        <location evidence="1">Cytoskeleton</location>
        <location evidence="1">Microtubule organizing center</location>
        <location evidence="1">Centrosome</location>
        <location evidence="1">Centriole</location>
    </subcellularLocation>
    <subcellularLocation>
        <location evidence="5 6">Nucleus</location>
    </subcellularLocation>
    <subcellularLocation>
        <location evidence="5 6">Cytoplasm</location>
    </subcellularLocation>
    <text evidence="5">In the cytoplasm, it is localized in large vesicles. These vesicles correspond to lysosomes and/or endosomes. Can shuttle between the cytoplasm and the nucleus in a manner correlated with Hh activity.</text>
</comment>
<comment type="alternative products">
    <event type="alternative splicing"/>
    <isoform>
        <id>Q7T019-1</id>
        <name>1</name>
        <sequence type="displayed"/>
    </isoform>
    <isoform>
        <id>Q7T019-2</id>
        <name>2</name>
        <sequence type="described" ref="VSP_010970"/>
    </isoform>
</comment>
<comment type="tissue specificity">
    <text evidence="5">Expressed throughout the embryo starting at 12 hours.</text>
</comment>
<comment type="disruption phenotype">
    <text evidence="5 6 7">Defects are a cause of reduced expression of Hh target genes in the ventral neural tube, similar to the phenotype seen in zebrafish mutants known to affect Hh signaling (PubMed:15115751, PubMed:15198976). Reduced cilium number in pronephric duct and Kupffer's vesicle (PubMed:19852954). Defects in left/right asymmetry, characterized by abnormal heart location on right or center of body (PubMed:19852954).</text>
</comment>
<comment type="similarity">
    <text evidence="9">Belongs to the DZIP C2H2-type zinc-finger protein family.</text>
</comment>
<comment type="sequence caution" evidence="9">
    <conflict type="erroneous gene model prediction">
        <sequence resource="EMBL-CDS" id="CAE30370"/>
    </conflict>
</comment>
<accession>Q7T019</accession>
<accession>Q8QFL8</accession>
<organism>
    <name type="scientific">Danio rerio</name>
    <name type="common">Zebrafish</name>
    <name type="synonym">Brachydanio rerio</name>
    <dbReference type="NCBI Taxonomy" id="7955"/>
    <lineage>
        <taxon>Eukaryota</taxon>
        <taxon>Metazoa</taxon>
        <taxon>Chordata</taxon>
        <taxon>Craniata</taxon>
        <taxon>Vertebrata</taxon>
        <taxon>Euteleostomi</taxon>
        <taxon>Actinopterygii</taxon>
        <taxon>Neopterygii</taxon>
        <taxon>Teleostei</taxon>
        <taxon>Ostariophysi</taxon>
        <taxon>Cypriniformes</taxon>
        <taxon>Danionidae</taxon>
        <taxon>Danioninae</taxon>
        <taxon>Danio</taxon>
    </lineage>
</organism>
<gene>
    <name type="primary">dzip1</name>
    <name type="synonym">igu</name>
    <name type="ORF">si:dz52i16.1</name>
</gene>
<keyword id="KW-0025">Alternative splicing</keyword>
<keyword id="KW-0966">Cell projection</keyword>
<keyword id="KW-0969">Cilium</keyword>
<keyword id="KW-0970">Cilium biogenesis/degradation</keyword>
<keyword id="KW-0175">Coiled coil</keyword>
<keyword id="KW-0963">Cytoplasm</keyword>
<keyword id="KW-0206">Cytoskeleton</keyword>
<keyword id="KW-0217">Developmental protein</keyword>
<keyword id="KW-0479">Metal-binding</keyword>
<keyword id="KW-0539">Nucleus</keyword>
<keyword id="KW-1185">Reference proteome</keyword>
<keyword id="KW-0862">Zinc</keyword>
<keyword id="KW-0863">Zinc-finger</keyword>
<proteinExistence type="evidence at transcript level"/>
<sequence length="898" mass="101728">MPFYDNVYYPYPSDPPGTHSSAGIPSLLSSPQSQPSSGSQSRPAPSTMSGPLTSSGASTSIPPPFKFRSRRENVDWRRINAVDVDRVACEMDFQALQEHINAVTFCSVEGERCHRCQSPVDPALIKLFRLAQLTVEYLLHSQDCLSISLQAAEERLLAEAREREQICVQLQKKTQDAKALKEELKQRKKIIASQQAMFSAGISANYHKCQHCEKAFMNASFLQSHMQRRHPSEFDMKLMTDNQKKIQTVKLQDEINKLQEQLTLVTSQMETQQKDYTAKQEKELIQRQEEFKRQLEIWKEEEKMRMNSKIDEVKQACQRDMDSINQRNRNLETELLKLQQKNIQESMQSVQTQPNASTSNEHWQEVVKLQQKLHKQEVKWTGKMQKMKEDHDREKSLLQEELCKVSSAVSEGMEESRRQVQELSHRLQEQQQIITSQNKQMKQISSKPPTITVQREGVSTPSPETKAKVVVSEQSNSVHKLDPIVELSEEDKDSSSISESPTENRSWQKEVQELLKNPGLRRDMRLAAQHNLDDRLQSLGIKGVSGLSKNLYKSSMTQIISDRRKKLEEDPVYRRALKEISHKLEQRVKERNTEQPVKSKLHEQVVQSRPRSSSFPSTVTRVMSGPASKQQRTPQPVPRSRTNVPHKTSTPLQHRRTPPFSSDEDSSEEEEEEEEEEESSDEESPQMQKKTVLVNSSTAKAQNTAKTQSTAQSVRSAVALTSAEPTNVTTLSDSDWTDGSEMEEINLSQLHKHTDQNGNLKNVTHSNVKALGKSLEKQLAARGPKKPAGGVNTFLEKPTDVRNTRQNAKKELKYSDDDDDDDDDWDISSLEDVPAVAKPTQCPVPVRKSLDKSQDTSTSVWGSSTGKGHKPGLTDAGTASTLKSSLVTVSDWDDSDEI</sequence>
<dbReference type="EMBL" id="AB106357">
    <property type="protein sequence ID" value="BAC87859.1"/>
    <property type="molecule type" value="mRNA"/>
</dbReference>
<dbReference type="EMBL" id="AB106358">
    <property type="protein sequence ID" value="BAC87860.1"/>
    <property type="molecule type" value="mRNA"/>
</dbReference>
<dbReference type="EMBL" id="AY551927">
    <property type="protein sequence ID" value="AAS58471.1"/>
    <property type="molecule type" value="mRNA"/>
</dbReference>
<dbReference type="EMBL" id="AL591370">
    <property type="protein sequence ID" value="CAD24437.2"/>
    <property type="molecule type" value="Genomic_DNA"/>
</dbReference>
<dbReference type="EMBL" id="AL591510">
    <property type="protein sequence ID" value="CAE30370.2"/>
    <property type="status" value="ALT_SEQ"/>
    <property type="molecule type" value="Genomic_DNA"/>
</dbReference>
<dbReference type="EMBL" id="BX663606">
    <property type="status" value="NOT_ANNOTATED_CDS"/>
    <property type="molecule type" value="Genomic_DNA"/>
</dbReference>
<dbReference type="SMR" id="Q7T019"/>
<dbReference type="FunCoup" id="Q7T019">
    <property type="interactions" value="868"/>
</dbReference>
<dbReference type="STRING" id="7955.ENSDARP00000105423"/>
<dbReference type="PaxDb" id="7955-ENSDARP00000105423"/>
<dbReference type="AGR" id="ZFIN:ZDB-GENE-040526-1"/>
<dbReference type="ZFIN" id="ZDB-GENE-040526-1">
    <property type="gene designation" value="dzip1"/>
</dbReference>
<dbReference type="eggNOG" id="ENOG502QRAI">
    <property type="taxonomic scope" value="Eukaryota"/>
</dbReference>
<dbReference type="InParanoid" id="Q7T019"/>
<dbReference type="PhylomeDB" id="Q7T019"/>
<dbReference type="Reactome" id="R-DRE-5632684">
    <property type="pathway name" value="Hedgehog 'on' state"/>
</dbReference>
<dbReference type="PRO" id="PR:Q7T019"/>
<dbReference type="Proteomes" id="UP000000437">
    <property type="component" value="Unplaced"/>
</dbReference>
<dbReference type="GO" id="GO:0034451">
    <property type="term" value="C:centriolar satellite"/>
    <property type="evidence" value="ECO:0000250"/>
    <property type="project" value="UniProtKB"/>
</dbReference>
<dbReference type="GO" id="GO:0005814">
    <property type="term" value="C:centriole"/>
    <property type="evidence" value="ECO:0007669"/>
    <property type="project" value="UniProtKB-SubCell"/>
</dbReference>
<dbReference type="GO" id="GO:0036064">
    <property type="term" value="C:ciliary basal body"/>
    <property type="evidence" value="ECO:0000314"/>
    <property type="project" value="ZFIN"/>
</dbReference>
<dbReference type="GO" id="GO:0005737">
    <property type="term" value="C:cytoplasm"/>
    <property type="evidence" value="ECO:0000314"/>
    <property type="project" value="ZFIN"/>
</dbReference>
<dbReference type="GO" id="GO:0097730">
    <property type="term" value="C:non-motile cilium"/>
    <property type="evidence" value="ECO:0000314"/>
    <property type="project" value="ZFIN"/>
</dbReference>
<dbReference type="GO" id="GO:0005634">
    <property type="term" value="C:nucleus"/>
    <property type="evidence" value="ECO:0000314"/>
    <property type="project" value="ZFIN"/>
</dbReference>
<dbReference type="GO" id="GO:0062063">
    <property type="term" value="F:BBSome binding"/>
    <property type="evidence" value="ECO:0000250"/>
    <property type="project" value="UniProtKB"/>
</dbReference>
<dbReference type="GO" id="GO:0060090">
    <property type="term" value="F:molecular adaptor activity"/>
    <property type="evidence" value="ECO:0000250"/>
    <property type="project" value="UniProtKB"/>
</dbReference>
<dbReference type="GO" id="GO:0008270">
    <property type="term" value="F:zinc ion binding"/>
    <property type="evidence" value="ECO:0007669"/>
    <property type="project" value="UniProtKB-KW"/>
</dbReference>
<dbReference type="GO" id="GO:0021984">
    <property type="term" value="P:adenohypophysis development"/>
    <property type="evidence" value="ECO:0000315"/>
    <property type="project" value="ZFIN"/>
</dbReference>
<dbReference type="GO" id="GO:0035082">
    <property type="term" value="P:axoneme assembly"/>
    <property type="evidence" value="ECO:0000315"/>
    <property type="project" value="ZFIN"/>
</dbReference>
<dbReference type="GO" id="GO:0001568">
    <property type="term" value="P:blood vessel development"/>
    <property type="evidence" value="ECO:0000315"/>
    <property type="project" value="ZFIN"/>
</dbReference>
<dbReference type="GO" id="GO:0032053">
    <property type="term" value="P:ciliary basal body organization"/>
    <property type="evidence" value="ECO:0000250"/>
    <property type="project" value="UniProtKB"/>
</dbReference>
<dbReference type="GO" id="GO:0060271">
    <property type="term" value="P:cilium assembly"/>
    <property type="evidence" value="ECO:0000315"/>
    <property type="project" value="ZFIN"/>
</dbReference>
<dbReference type="GO" id="GO:0061371">
    <property type="term" value="P:determination of heart left/right asymmetry"/>
    <property type="evidence" value="ECO:0000315"/>
    <property type="project" value="ZFIN"/>
</dbReference>
<dbReference type="GO" id="GO:0007368">
    <property type="term" value="P:determination of left/right symmetry"/>
    <property type="evidence" value="ECO:0000315"/>
    <property type="project" value="ZFIN"/>
</dbReference>
<dbReference type="GO" id="GO:0003143">
    <property type="term" value="P:embryonic heart tube morphogenesis"/>
    <property type="evidence" value="ECO:0000315"/>
    <property type="project" value="ZFIN"/>
</dbReference>
<dbReference type="GO" id="GO:0001947">
    <property type="term" value="P:heart looping"/>
    <property type="evidence" value="ECO:0000315"/>
    <property type="project" value="ZFIN"/>
</dbReference>
<dbReference type="GO" id="GO:0006607">
    <property type="term" value="P:NLS-bearing protein import into nucleus"/>
    <property type="evidence" value="ECO:0000314"/>
    <property type="project" value="ZFIN"/>
</dbReference>
<dbReference type="GO" id="GO:0140706">
    <property type="term" value="P:protein-containing complex localization to centriolar satellite"/>
    <property type="evidence" value="ECO:0000250"/>
    <property type="project" value="UniProtKB"/>
</dbReference>
<dbReference type="GO" id="GO:0030510">
    <property type="term" value="P:regulation of BMP signaling pathway"/>
    <property type="evidence" value="ECO:0000315"/>
    <property type="project" value="ZFIN"/>
</dbReference>
<dbReference type="GO" id="GO:0008589">
    <property type="term" value="P:regulation of smoothened signaling pathway"/>
    <property type="evidence" value="ECO:0000315"/>
    <property type="project" value="ZFIN"/>
</dbReference>
<dbReference type="GO" id="GO:0031290">
    <property type="term" value="P:retinal ganglion cell axon guidance"/>
    <property type="evidence" value="ECO:0000315"/>
    <property type="project" value="ZFIN"/>
</dbReference>
<dbReference type="GO" id="GO:0120316">
    <property type="term" value="P:sperm flagellum assembly"/>
    <property type="evidence" value="ECO:0000250"/>
    <property type="project" value="UniProtKB"/>
</dbReference>
<dbReference type="FunFam" id="3.30.160.60:FF:001591">
    <property type="entry name" value="DAZ interacting zinc finger protein 1"/>
    <property type="match status" value="1"/>
</dbReference>
<dbReference type="Gene3D" id="3.30.160.60">
    <property type="entry name" value="Classic Zinc Finger"/>
    <property type="match status" value="1"/>
</dbReference>
<dbReference type="InterPro" id="IPR032714">
    <property type="entry name" value="DZIP1_N"/>
</dbReference>
<dbReference type="InterPro" id="IPR051241">
    <property type="entry name" value="DZIP_RILPL"/>
</dbReference>
<dbReference type="InterPro" id="IPR013087">
    <property type="entry name" value="Znf_C2H2_type"/>
</dbReference>
<dbReference type="PANTHER" id="PTHR21502:SF5">
    <property type="entry name" value="CILIUM ASSEMBLY PROTEIN DZIP1"/>
    <property type="match status" value="1"/>
</dbReference>
<dbReference type="PANTHER" id="PTHR21502">
    <property type="entry name" value="ZINC FINGER PROTEIN DZIP1"/>
    <property type="match status" value="1"/>
</dbReference>
<dbReference type="Pfam" id="PF13815">
    <property type="entry name" value="Dzip-like_N"/>
    <property type="match status" value="1"/>
</dbReference>
<dbReference type="PROSITE" id="PS00028">
    <property type="entry name" value="ZINC_FINGER_C2H2_1"/>
    <property type="match status" value="1"/>
</dbReference>
<dbReference type="PROSITE" id="PS50157">
    <property type="entry name" value="ZINC_FINGER_C2H2_2"/>
    <property type="match status" value="1"/>
</dbReference>
<protein>
    <recommendedName>
        <fullName evidence="9">Cilium assembly protein DZIP1</fullName>
    </recommendedName>
    <alternativeName>
        <fullName evidence="1">DAZ-interacting protein 1 homolog</fullName>
    </alternativeName>
    <alternativeName>
        <fullName>DAZ-interacting zinc finger protein 1</fullName>
    </alternativeName>
    <alternativeName>
        <fullName>Iguana protein</fullName>
    </alternativeName>
</protein>
<name>DZIP1_DANRE</name>
<reference key="1">
    <citation type="journal article" date="2004" name="Development">
        <title>The zebrafish iguana locus encodes Dzip1, a novel zinc-finger protein required for proper regulation of Hedgehog signaling.</title>
        <authorList>
            <person name="Sekimizu K."/>
            <person name="Nishioka N."/>
            <person name="Sasaki H."/>
            <person name="Takeda H."/>
            <person name="Karlstrom R.O."/>
            <person name="Kawakami K."/>
        </authorList>
    </citation>
    <scope>NUCLEOTIDE SEQUENCE [MRNA] (ISOFORMS 1 AND 2)</scope>
    <scope>FUNCTION</scope>
    <scope>SUBCELLULAR LOCATION</scope>
    <scope>TISSUE SPECIFICITY</scope>
    <scope>DISRUPTION PHENOTYPE</scope>
</reference>
<reference key="2">
    <citation type="journal article" date="2004" name="Genes Dev.">
        <title>Iguana encodes a novel zinc-finger protein with coiled-coil domains essential for Hedgehog signal transduction in the zebrafish embryo.</title>
        <authorList>
            <person name="Wolff C."/>
            <person name="Roy S."/>
            <person name="Lewis K.E."/>
            <person name="Schauerte H."/>
            <person name="Joerg-Rauch G."/>
            <person name="Kirn A."/>
            <person name="Weiler C."/>
            <person name="Geisler R."/>
            <person name="Haffter P."/>
            <person name="Ingham P.W."/>
        </authorList>
    </citation>
    <scope>NUCLEOTIDE SEQUENCE [MRNA] (ISOFORM 1)</scope>
    <scope>FUNCTION</scope>
    <scope>SUBCELLULAR LOCATION</scope>
    <scope>DISRUPTION PHENOTYPE</scope>
</reference>
<reference key="3">
    <citation type="journal article" date="2013" name="Nature">
        <title>The zebrafish reference genome sequence and its relationship to the human genome.</title>
        <authorList>
            <person name="Howe K."/>
            <person name="Clark M.D."/>
            <person name="Torroja C.F."/>
            <person name="Torrance J."/>
            <person name="Berthelot C."/>
            <person name="Muffato M."/>
            <person name="Collins J.E."/>
            <person name="Humphray S."/>
            <person name="McLaren K."/>
            <person name="Matthews L."/>
            <person name="McLaren S."/>
            <person name="Sealy I."/>
            <person name="Caccamo M."/>
            <person name="Churcher C."/>
            <person name="Scott C."/>
            <person name="Barrett J.C."/>
            <person name="Koch R."/>
            <person name="Rauch G.J."/>
            <person name="White S."/>
            <person name="Chow W."/>
            <person name="Kilian B."/>
            <person name="Quintais L.T."/>
            <person name="Guerra-Assuncao J.A."/>
            <person name="Zhou Y."/>
            <person name="Gu Y."/>
            <person name="Yen J."/>
            <person name="Vogel J.H."/>
            <person name="Eyre T."/>
            <person name="Redmond S."/>
            <person name="Banerjee R."/>
            <person name="Chi J."/>
            <person name="Fu B."/>
            <person name="Langley E."/>
            <person name="Maguire S.F."/>
            <person name="Laird G.K."/>
            <person name="Lloyd D."/>
            <person name="Kenyon E."/>
            <person name="Donaldson S."/>
            <person name="Sehra H."/>
            <person name="Almeida-King J."/>
            <person name="Loveland J."/>
            <person name="Trevanion S."/>
            <person name="Jones M."/>
            <person name="Quail M."/>
            <person name="Willey D."/>
            <person name="Hunt A."/>
            <person name="Burton J."/>
            <person name="Sims S."/>
            <person name="McLay K."/>
            <person name="Plumb B."/>
            <person name="Davis J."/>
            <person name="Clee C."/>
            <person name="Oliver K."/>
            <person name="Clark R."/>
            <person name="Riddle C."/>
            <person name="Elliot D."/>
            <person name="Threadgold G."/>
            <person name="Harden G."/>
            <person name="Ware D."/>
            <person name="Begum S."/>
            <person name="Mortimore B."/>
            <person name="Kerry G."/>
            <person name="Heath P."/>
            <person name="Phillimore B."/>
            <person name="Tracey A."/>
            <person name="Corby N."/>
            <person name="Dunn M."/>
            <person name="Johnson C."/>
            <person name="Wood J."/>
            <person name="Clark S."/>
            <person name="Pelan S."/>
            <person name="Griffiths G."/>
            <person name="Smith M."/>
            <person name="Glithero R."/>
            <person name="Howden P."/>
            <person name="Barker N."/>
            <person name="Lloyd C."/>
            <person name="Stevens C."/>
            <person name="Harley J."/>
            <person name="Holt K."/>
            <person name="Panagiotidis G."/>
            <person name="Lovell J."/>
            <person name="Beasley H."/>
            <person name="Henderson C."/>
            <person name="Gordon D."/>
            <person name="Auger K."/>
            <person name="Wright D."/>
            <person name="Collins J."/>
            <person name="Raisen C."/>
            <person name="Dyer L."/>
            <person name="Leung K."/>
            <person name="Robertson L."/>
            <person name="Ambridge K."/>
            <person name="Leongamornlert D."/>
            <person name="McGuire S."/>
            <person name="Gilderthorp R."/>
            <person name="Griffiths C."/>
            <person name="Manthravadi D."/>
            <person name="Nichol S."/>
            <person name="Barker G."/>
            <person name="Whitehead S."/>
            <person name="Kay M."/>
            <person name="Brown J."/>
            <person name="Murnane C."/>
            <person name="Gray E."/>
            <person name="Humphries M."/>
            <person name="Sycamore N."/>
            <person name="Barker D."/>
            <person name="Saunders D."/>
            <person name="Wallis J."/>
            <person name="Babbage A."/>
            <person name="Hammond S."/>
            <person name="Mashreghi-Mohammadi M."/>
            <person name="Barr L."/>
            <person name="Martin S."/>
            <person name="Wray P."/>
            <person name="Ellington A."/>
            <person name="Matthews N."/>
            <person name="Ellwood M."/>
            <person name="Woodmansey R."/>
            <person name="Clark G."/>
            <person name="Cooper J."/>
            <person name="Tromans A."/>
            <person name="Grafham D."/>
            <person name="Skuce C."/>
            <person name="Pandian R."/>
            <person name="Andrews R."/>
            <person name="Harrison E."/>
            <person name="Kimberley A."/>
            <person name="Garnett J."/>
            <person name="Fosker N."/>
            <person name="Hall R."/>
            <person name="Garner P."/>
            <person name="Kelly D."/>
            <person name="Bird C."/>
            <person name="Palmer S."/>
            <person name="Gehring I."/>
            <person name="Berger A."/>
            <person name="Dooley C.M."/>
            <person name="Ersan-Urun Z."/>
            <person name="Eser C."/>
            <person name="Geiger H."/>
            <person name="Geisler M."/>
            <person name="Karotki L."/>
            <person name="Kirn A."/>
            <person name="Konantz J."/>
            <person name="Konantz M."/>
            <person name="Oberlander M."/>
            <person name="Rudolph-Geiger S."/>
            <person name="Teucke M."/>
            <person name="Lanz C."/>
            <person name="Raddatz G."/>
            <person name="Osoegawa K."/>
            <person name="Zhu B."/>
            <person name="Rapp A."/>
            <person name="Widaa S."/>
            <person name="Langford C."/>
            <person name="Yang F."/>
            <person name="Schuster S.C."/>
            <person name="Carter N.P."/>
            <person name="Harrow J."/>
            <person name="Ning Z."/>
            <person name="Herrero J."/>
            <person name="Searle S.M."/>
            <person name="Enright A."/>
            <person name="Geisler R."/>
            <person name="Plasterk R.H."/>
            <person name="Lee C."/>
            <person name="Westerfield M."/>
            <person name="de Jong P.J."/>
            <person name="Zon L.I."/>
            <person name="Postlethwait J.H."/>
            <person name="Nusslein-Volhard C."/>
            <person name="Hubbard T.J."/>
            <person name="Roest Crollius H."/>
            <person name="Rogers J."/>
            <person name="Stemple D.L."/>
        </authorList>
    </citation>
    <scope>NUCLEOTIDE SEQUENCE [LARGE SCALE GENOMIC DNA]</scope>
    <source>
        <strain>Tuebingen</strain>
    </source>
</reference>
<reference key="4">
    <citation type="journal article" date="2010" name="Dev. Biol.">
        <title>The Zn finger protein Iguana impacts Hedgehog signaling by promoting ciliogenesis.</title>
        <authorList>
            <person name="Glazer A.M."/>
            <person name="Wilkinson A.W."/>
            <person name="Backer C.B."/>
            <person name="Lapan S.W."/>
            <person name="Gutzman J.H."/>
            <person name="Cheeseman I.M."/>
            <person name="Reddien P.W."/>
        </authorList>
    </citation>
    <scope>FUNCTION</scope>
    <scope>SUBCELLULAR LOCATION</scope>
    <scope>DISRUPTION PHENOTYPE</scope>
</reference>